<gene>
    <name evidence="1" type="primary">gmhA</name>
    <name type="ordered locus">KPN78578_02280</name>
    <name type="ORF">KPN_00236</name>
</gene>
<keyword id="KW-0119">Carbohydrate metabolism</keyword>
<keyword id="KW-0963">Cytoplasm</keyword>
<keyword id="KW-0413">Isomerase</keyword>
<keyword id="KW-0479">Metal-binding</keyword>
<keyword id="KW-0862">Zinc</keyword>
<organism>
    <name type="scientific">Klebsiella pneumoniae subsp. pneumoniae (strain ATCC 700721 / MGH 78578)</name>
    <dbReference type="NCBI Taxonomy" id="272620"/>
    <lineage>
        <taxon>Bacteria</taxon>
        <taxon>Pseudomonadati</taxon>
        <taxon>Pseudomonadota</taxon>
        <taxon>Gammaproteobacteria</taxon>
        <taxon>Enterobacterales</taxon>
        <taxon>Enterobacteriaceae</taxon>
        <taxon>Klebsiella/Raoultella group</taxon>
        <taxon>Klebsiella</taxon>
        <taxon>Klebsiella pneumoniae complex</taxon>
    </lineage>
</organism>
<sequence>MYQDLIRNELNEAAETLANFLQDEANIHAIQRAAVLLADSFKAGGKVLSCGNGGSHCDAMHFAEELTGRYRENRPGYPAIAISDVSHLSCVSNDFGYEYVFSRYVESVGRAGDVLLGISTSGNSGNVIKAIEAARAQGMKVITLTGKDGGKMAGSADVEIRVPHFGYADRIQEIHIKVIHILIMLIEKEMAKG</sequence>
<feature type="chain" id="PRO_1000009074" description="Phosphoheptose isomerase">
    <location>
        <begin position="1"/>
        <end position="193"/>
    </location>
</feature>
<feature type="domain" description="SIS" evidence="1">
    <location>
        <begin position="37"/>
        <end position="193"/>
    </location>
</feature>
<feature type="binding site" evidence="1">
    <location>
        <begin position="52"/>
        <end position="54"/>
    </location>
    <ligand>
        <name>substrate</name>
    </ligand>
</feature>
<feature type="binding site" evidence="1">
    <location>
        <position position="61"/>
    </location>
    <ligand>
        <name>Zn(2+)</name>
        <dbReference type="ChEBI" id="CHEBI:29105"/>
    </ligand>
</feature>
<feature type="binding site" evidence="1">
    <location>
        <position position="65"/>
    </location>
    <ligand>
        <name>substrate</name>
    </ligand>
</feature>
<feature type="binding site" evidence="1">
    <location>
        <position position="65"/>
    </location>
    <ligand>
        <name>Zn(2+)</name>
        <dbReference type="ChEBI" id="CHEBI:29105"/>
    </ligand>
</feature>
<feature type="binding site" evidence="1">
    <location>
        <begin position="93"/>
        <end position="94"/>
    </location>
    <ligand>
        <name>substrate</name>
    </ligand>
</feature>
<feature type="binding site" evidence="1">
    <location>
        <begin position="119"/>
        <end position="121"/>
    </location>
    <ligand>
        <name>substrate</name>
    </ligand>
</feature>
<feature type="binding site" evidence="1">
    <location>
        <position position="124"/>
    </location>
    <ligand>
        <name>substrate</name>
    </ligand>
</feature>
<feature type="binding site" evidence="1">
    <location>
        <position position="172"/>
    </location>
    <ligand>
        <name>substrate</name>
    </ligand>
</feature>
<feature type="binding site" evidence="1">
    <location>
        <position position="172"/>
    </location>
    <ligand>
        <name>Zn(2+)</name>
        <dbReference type="ChEBI" id="CHEBI:29105"/>
    </ligand>
</feature>
<feature type="binding site" evidence="1">
    <location>
        <position position="180"/>
    </location>
    <ligand>
        <name>Zn(2+)</name>
        <dbReference type="ChEBI" id="CHEBI:29105"/>
    </ligand>
</feature>
<reference key="1">
    <citation type="submission" date="2006-09" db="EMBL/GenBank/DDBJ databases">
        <authorList>
            <consortium name="The Klebsiella pneumonia Genome Sequencing Project"/>
            <person name="McClelland M."/>
            <person name="Sanderson E.K."/>
            <person name="Spieth J."/>
            <person name="Clifton W.S."/>
            <person name="Latreille P."/>
            <person name="Sabo A."/>
            <person name="Pepin K."/>
            <person name="Bhonagiri V."/>
            <person name="Porwollik S."/>
            <person name="Ali J."/>
            <person name="Wilson R.K."/>
        </authorList>
    </citation>
    <scope>NUCLEOTIDE SEQUENCE [LARGE SCALE GENOMIC DNA]</scope>
    <source>
        <strain>ATCC 700721 / MGH 78578</strain>
    </source>
</reference>
<evidence type="ECO:0000255" key="1">
    <source>
        <dbReference type="HAMAP-Rule" id="MF_00067"/>
    </source>
</evidence>
<protein>
    <recommendedName>
        <fullName evidence="1">Phosphoheptose isomerase</fullName>
        <ecNumber evidence="1">5.3.1.28</ecNumber>
    </recommendedName>
    <alternativeName>
        <fullName evidence="1">Sedoheptulose 7-phosphate isomerase</fullName>
    </alternativeName>
</protein>
<name>GMHA_KLEP7</name>
<comment type="function">
    <text evidence="1">Catalyzes the isomerization of sedoheptulose 7-phosphate in D-glycero-D-manno-heptose 7-phosphate.</text>
</comment>
<comment type="catalytic activity">
    <reaction evidence="1">
        <text>2 D-sedoheptulose 7-phosphate = D-glycero-alpha-D-manno-heptose 7-phosphate + D-glycero-beta-D-manno-heptose 7-phosphate</text>
        <dbReference type="Rhea" id="RHEA:27489"/>
        <dbReference type="ChEBI" id="CHEBI:57483"/>
        <dbReference type="ChEBI" id="CHEBI:60203"/>
        <dbReference type="ChEBI" id="CHEBI:60204"/>
        <dbReference type="EC" id="5.3.1.28"/>
    </reaction>
</comment>
<comment type="cofactor">
    <cofactor evidence="1">
        <name>Zn(2+)</name>
        <dbReference type="ChEBI" id="CHEBI:29105"/>
    </cofactor>
    <text evidence="1">Binds 1 zinc ion per subunit.</text>
</comment>
<comment type="pathway">
    <text evidence="1">Carbohydrate biosynthesis; D-glycero-D-manno-heptose 7-phosphate biosynthesis; D-glycero-alpha-D-manno-heptose 7-phosphate and D-glycero-beta-D-manno-heptose 7-phosphate from sedoheptulose 7-phosphate: step 1/1.</text>
</comment>
<comment type="subunit">
    <text evidence="1">Homotetramer.</text>
</comment>
<comment type="subcellular location">
    <subcellularLocation>
        <location evidence="1">Cytoplasm</location>
    </subcellularLocation>
</comment>
<comment type="miscellaneous">
    <text evidence="1">The reaction produces a racemic mixture of D-glycero-alpha-D-manno-heptose 7-phosphate and D-glycero-beta-D-manno-heptose 7-phosphate.</text>
</comment>
<comment type="similarity">
    <text evidence="1">Belongs to the SIS family. GmhA subfamily.</text>
</comment>
<accession>A6T518</accession>
<proteinExistence type="inferred from homology"/>
<dbReference type="EC" id="5.3.1.28" evidence="1"/>
<dbReference type="EMBL" id="CP000647">
    <property type="protein sequence ID" value="ABR75689.1"/>
    <property type="molecule type" value="Genomic_DNA"/>
</dbReference>
<dbReference type="SMR" id="A6T518"/>
<dbReference type="STRING" id="272620.KPN_00236"/>
<dbReference type="jPOST" id="A6T518"/>
<dbReference type="PaxDb" id="272620-KPN_00236"/>
<dbReference type="EnsemblBacteria" id="ABR75689">
    <property type="protein sequence ID" value="ABR75689"/>
    <property type="gene ID" value="KPN_00236"/>
</dbReference>
<dbReference type="KEGG" id="kpn:KPN_00236"/>
<dbReference type="HOGENOM" id="CLU_080999_4_0_6"/>
<dbReference type="UniPathway" id="UPA00041">
    <property type="reaction ID" value="UER00436"/>
</dbReference>
<dbReference type="Proteomes" id="UP000000265">
    <property type="component" value="Chromosome"/>
</dbReference>
<dbReference type="GO" id="GO:0005737">
    <property type="term" value="C:cytoplasm"/>
    <property type="evidence" value="ECO:0007669"/>
    <property type="project" value="UniProtKB-SubCell"/>
</dbReference>
<dbReference type="GO" id="GO:0097367">
    <property type="term" value="F:carbohydrate derivative binding"/>
    <property type="evidence" value="ECO:0007669"/>
    <property type="project" value="InterPro"/>
</dbReference>
<dbReference type="GO" id="GO:0008968">
    <property type="term" value="F:D-sedoheptulose 7-phosphate isomerase activity"/>
    <property type="evidence" value="ECO:0007669"/>
    <property type="project" value="UniProtKB-UniRule"/>
</dbReference>
<dbReference type="GO" id="GO:0008270">
    <property type="term" value="F:zinc ion binding"/>
    <property type="evidence" value="ECO:0007669"/>
    <property type="project" value="UniProtKB-UniRule"/>
</dbReference>
<dbReference type="GO" id="GO:0005975">
    <property type="term" value="P:carbohydrate metabolic process"/>
    <property type="evidence" value="ECO:0007669"/>
    <property type="project" value="UniProtKB-UniRule"/>
</dbReference>
<dbReference type="GO" id="GO:2001061">
    <property type="term" value="P:D-glycero-D-manno-heptose 7-phosphate biosynthetic process"/>
    <property type="evidence" value="ECO:0007669"/>
    <property type="project" value="UniProtKB-UniPathway"/>
</dbReference>
<dbReference type="CDD" id="cd05006">
    <property type="entry name" value="SIS_GmhA"/>
    <property type="match status" value="1"/>
</dbReference>
<dbReference type="FunFam" id="3.40.50.10490:FF:000013">
    <property type="entry name" value="Phosphoheptose isomerase"/>
    <property type="match status" value="1"/>
</dbReference>
<dbReference type="Gene3D" id="3.40.50.10490">
    <property type="entry name" value="Glucose-6-phosphate isomerase like protein, domain 1"/>
    <property type="match status" value="1"/>
</dbReference>
<dbReference type="HAMAP" id="MF_00067">
    <property type="entry name" value="GmhA"/>
    <property type="match status" value="1"/>
</dbReference>
<dbReference type="InterPro" id="IPR035461">
    <property type="entry name" value="GmhA/DiaA"/>
</dbReference>
<dbReference type="InterPro" id="IPR004515">
    <property type="entry name" value="Phosphoheptose_Isoase"/>
</dbReference>
<dbReference type="InterPro" id="IPR001347">
    <property type="entry name" value="SIS_dom"/>
</dbReference>
<dbReference type="InterPro" id="IPR046348">
    <property type="entry name" value="SIS_dom_sf"/>
</dbReference>
<dbReference type="InterPro" id="IPR050099">
    <property type="entry name" value="SIS_GmhA/DiaA_subfam"/>
</dbReference>
<dbReference type="NCBIfam" id="TIGR00441">
    <property type="entry name" value="gmhA"/>
    <property type="match status" value="1"/>
</dbReference>
<dbReference type="NCBIfam" id="NF001628">
    <property type="entry name" value="PRK00414.1"/>
    <property type="match status" value="1"/>
</dbReference>
<dbReference type="PANTHER" id="PTHR30390:SF7">
    <property type="entry name" value="PHOSPHOHEPTOSE ISOMERASE"/>
    <property type="match status" value="1"/>
</dbReference>
<dbReference type="PANTHER" id="PTHR30390">
    <property type="entry name" value="SEDOHEPTULOSE 7-PHOSPHATE ISOMERASE / DNAA INITIATOR-ASSOCIATING FACTOR FOR REPLICATION INITIATION"/>
    <property type="match status" value="1"/>
</dbReference>
<dbReference type="Pfam" id="PF13580">
    <property type="entry name" value="SIS_2"/>
    <property type="match status" value="1"/>
</dbReference>
<dbReference type="SUPFAM" id="SSF53697">
    <property type="entry name" value="SIS domain"/>
    <property type="match status" value="1"/>
</dbReference>
<dbReference type="PROSITE" id="PS51464">
    <property type="entry name" value="SIS"/>
    <property type="match status" value="1"/>
</dbReference>